<accession>Q6L3B5</accession>
<reference key="1">
    <citation type="journal article" date="2004" name="Curr. Genet.">
        <title>Structural features and transcript-editing analysis of sugarcane (Saccharum officinarum L.) chloroplast genome.</title>
        <authorList>
            <person name="Calsa T. Jr."/>
            <person name="Carraro D.M."/>
            <person name="Benatti M.R."/>
            <person name="Barbosa A.C."/>
            <person name="Kitajima J.P."/>
            <person name="Carrer H."/>
        </authorList>
    </citation>
    <scope>NUCLEOTIDE SEQUENCE [LARGE SCALE GENOMIC DNA]</scope>
    <source>
        <strain>cv. SP-80-3280</strain>
    </source>
</reference>
<keyword id="KW-0007">Acetylation</keyword>
<keyword id="KW-0106">Calcium</keyword>
<keyword id="KW-0148">Chlorophyll</keyword>
<keyword id="KW-0150">Chloroplast</keyword>
<keyword id="KW-0157">Chromophore</keyword>
<keyword id="KW-0249">Electron transport</keyword>
<keyword id="KW-0359">Herbicide resistance</keyword>
<keyword id="KW-0408">Iron</keyword>
<keyword id="KW-0460">Magnesium</keyword>
<keyword id="KW-0464">Manganese</keyword>
<keyword id="KW-0472">Membrane</keyword>
<keyword id="KW-0479">Metal-binding</keyword>
<keyword id="KW-0560">Oxidoreductase</keyword>
<keyword id="KW-0597">Phosphoprotein</keyword>
<keyword id="KW-0602">Photosynthesis</keyword>
<keyword id="KW-0604">Photosystem II</keyword>
<keyword id="KW-0934">Plastid</keyword>
<keyword id="KW-0793">Thylakoid</keyword>
<keyword id="KW-0812">Transmembrane</keyword>
<keyword id="KW-1133">Transmembrane helix</keyword>
<keyword id="KW-0813">Transport</keyword>
<name>PSBA_SACHY</name>
<gene>
    <name evidence="1" type="primary">psbA</name>
    <name type="ordered locus">PS082</name>
</gene>
<geneLocation type="chloroplast"/>
<dbReference type="EC" id="1.10.3.9" evidence="1"/>
<dbReference type="EMBL" id="AE009947">
    <property type="protein sequence ID" value="AAT44677.1"/>
    <property type="molecule type" value="Genomic_DNA"/>
</dbReference>
<dbReference type="SMR" id="Q6L3B5"/>
<dbReference type="GO" id="GO:0009535">
    <property type="term" value="C:chloroplast thylakoid membrane"/>
    <property type="evidence" value="ECO:0007669"/>
    <property type="project" value="UniProtKB-SubCell"/>
</dbReference>
<dbReference type="GO" id="GO:0009523">
    <property type="term" value="C:photosystem II"/>
    <property type="evidence" value="ECO:0007669"/>
    <property type="project" value="UniProtKB-KW"/>
</dbReference>
<dbReference type="GO" id="GO:0016168">
    <property type="term" value="F:chlorophyll binding"/>
    <property type="evidence" value="ECO:0007669"/>
    <property type="project" value="UniProtKB-UniRule"/>
</dbReference>
<dbReference type="GO" id="GO:0045156">
    <property type="term" value="F:electron transporter, transferring electrons within the cyclic electron transport pathway of photosynthesis activity"/>
    <property type="evidence" value="ECO:0007669"/>
    <property type="project" value="InterPro"/>
</dbReference>
<dbReference type="GO" id="GO:0005506">
    <property type="term" value="F:iron ion binding"/>
    <property type="evidence" value="ECO:0007669"/>
    <property type="project" value="UniProtKB-UniRule"/>
</dbReference>
<dbReference type="GO" id="GO:0016682">
    <property type="term" value="F:oxidoreductase activity, acting on diphenols and related substances as donors, oxygen as acceptor"/>
    <property type="evidence" value="ECO:0007669"/>
    <property type="project" value="UniProtKB-UniRule"/>
</dbReference>
<dbReference type="GO" id="GO:0010242">
    <property type="term" value="F:oxygen evolving activity"/>
    <property type="evidence" value="ECO:0007669"/>
    <property type="project" value="UniProtKB-EC"/>
</dbReference>
<dbReference type="GO" id="GO:0009772">
    <property type="term" value="P:photosynthetic electron transport in photosystem II"/>
    <property type="evidence" value="ECO:0007669"/>
    <property type="project" value="InterPro"/>
</dbReference>
<dbReference type="GO" id="GO:0009635">
    <property type="term" value="P:response to herbicide"/>
    <property type="evidence" value="ECO:0007669"/>
    <property type="project" value="UniProtKB-KW"/>
</dbReference>
<dbReference type="CDD" id="cd09289">
    <property type="entry name" value="Photosystem-II_D1"/>
    <property type="match status" value="1"/>
</dbReference>
<dbReference type="FunFam" id="1.20.85.10:FF:000002">
    <property type="entry name" value="Photosystem II protein D1"/>
    <property type="match status" value="1"/>
</dbReference>
<dbReference type="Gene3D" id="1.20.85.10">
    <property type="entry name" value="Photosystem II protein D1-like"/>
    <property type="match status" value="1"/>
</dbReference>
<dbReference type="HAMAP" id="MF_01379">
    <property type="entry name" value="PSII_PsbA_D1"/>
    <property type="match status" value="1"/>
</dbReference>
<dbReference type="InterPro" id="IPR055266">
    <property type="entry name" value="D1/D2"/>
</dbReference>
<dbReference type="InterPro" id="IPR036854">
    <property type="entry name" value="Photo_II_D1/D2_sf"/>
</dbReference>
<dbReference type="InterPro" id="IPR000484">
    <property type="entry name" value="Photo_RC_L/M"/>
</dbReference>
<dbReference type="InterPro" id="IPR055265">
    <property type="entry name" value="Photo_RC_L/M_CS"/>
</dbReference>
<dbReference type="InterPro" id="IPR005867">
    <property type="entry name" value="PSII_D1"/>
</dbReference>
<dbReference type="NCBIfam" id="TIGR01151">
    <property type="entry name" value="psbA"/>
    <property type="match status" value="1"/>
</dbReference>
<dbReference type="PANTHER" id="PTHR33149">
    <property type="entry name" value="PHOTOSYSTEM II PROTEIN D1"/>
    <property type="match status" value="1"/>
</dbReference>
<dbReference type="PANTHER" id="PTHR33149:SF58">
    <property type="entry name" value="PHOTOSYSTEM II PROTEIN D1"/>
    <property type="match status" value="1"/>
</dbReference>
<dbReference type="Pfam" id="PF00124">
    <property type="entry name" value="Photo_RC"/>
    <property type="match status" value="1"/>
</dbReference>
<dbReference type="PRINTS" id="PR00256">
    <property type="entry name" value="REACTNCENTRE"/>
</dbReference>
<dbReference type="SUPFAM" id="SSF81483">
    <property type="entry name" value="Bacterial photosystem II reaction centre, L and M subunits"/>
    <property type="match status" value="1"/>
</dbReference>
<dbReference type="PROSITE" id="PS00244">
    <property type="entry name" value="REACTION_CENTER"/>
    <property type="match status" value="1"/>
</dbReference>
<feature type="initiator methionine" description="Removed" evidence="1">
    <location>
        <position position="1"/>
    </location>
</feature>
<feature type="chain" id="PRO_0000226920" description="Photosystem II protein D1" evidence="1">
    <location>
        <begin position="2"/>
        <end position="344"/>
    </location>
</feature>
<feature type="propeptide" id="PRO_0000316479" evidence="1">
    <location>
        <begin position="345"/>
        <end position="353"/>
    </location>
</feature>
<feature type="transmembrane region" description="Helical" evidence="1">
    <location>
        <begin position="29"/>
        <end position="46"/>
    </location>
</feature>
<feature type="transmembrane region" description="Helical" evidence="1">
    <location>
        <begin position="118"/>
        <end position="133"/>
    </location>
</feature>
<feature type="transmembrane region" description="Helical" evidence="1">
    <location>
        <begin position="142"/>
        <end position="156"/>
    </location>
</feature>
<feature type="transmembrane region" description="Helical" evidence="1">
    <location>
        <begin position="197"/>
        <end position="218"/>
    </location>
</feature>
<feature type="transmembrane region" description="Helical" evidence="1">
    <location>
        <begin position="274"/>
        <end position="288"/>
    </location>
</feature>
<feature type="binding site" description="axial binding residue" evidence="1">
    <location>
        <position position="118"/>
    </location>
    <ligand>
        <name>chlorophyll a</name>
        <dbReference type="ChEBI" id="CHEBI:58416"/>
        <label>ChlzD1</label>
    </ligand>
    <ligandPart>
        <name>Mg</name>
        <dbReference type="ChEBI" id="CHEBI:25107"/>
    </ligandPart>
</feature>
<feature type="binding site" evidence="1">
    <location>
        <position position="126"/>
    </location>
    <ligand>
        <name>pheophytin a</name>
        <dbReference type="ChEBI" id="CHEBI:136840"/>
        <label>D1</label>
    </ligand>
</feature>
<feature type="binding site" evidence="1">
    <location>
        <position position="170"/>
    </location>
    <ligand>
        <name>[CaMn4O5] cluster</name>
        <dbReference type="ChEBI" id="CHEBI:189552"/>
    </ligand>
</feature>
<feature type="binding site" evidence="1">
    <location>
        <position position="189"/>
    </location>
    <ligand>
        <name>[CaMn4O5] cluster</name>
        <dbReference type="ChEBI" id="CHEBI:189552"/>
    </ligand>
</feature>
<feature type="binding site" description="axial binding residue" evidence="1">
    <location>
        <position position="198"/>
    </location>
    <ligand>
        <name>chlorophyll a</name>
        <dbReference type="ChEBI" id="CHEBI:58416"/>
        <label>PD1</label>
    </ligand>
    <ligandPart>
        <name>Mg</name>
        <dbReference type="ChEBI" id="CHEBI:25107"/>
    </ligandPart>
</feature>
<feature type="binding site" evidence="1">
    <location>
        <position position="215"/>
    </location>
    <ligand>
        <name>a quinone</name>
        <dbReference type="ChEBI" id="CHEBI:132124"/>
        <label>B</label>
    </ligand>
</feature>
<feature type="binding site" evidence="1">
    <location>
        <position position="215"/>
    </location>
    <ligand>
        <name>Fe cation</name>
        <dbReference type="ChEBI" id="CHEBI:24875"/>
        <note>ligand shared with heterodimeric partner</note>
    </ligand>
</feature>
<feature type="binding site" evidence="1">
    <location>
        <begin position="264"/>
        <end position="265"/>
    </location>
    <ligand>
        <name>a quinone</name>
        <dbReference type="ChEBI" id="CHEBI:132124"/>
        <label>B</label>
    </ligand>
</feature>
<feature type="binding site" evidence="1">
    <location>
        <position position="272"/>
    </location>
    <ligand>
        <name>Fe cation</name>
        <dbReference type="ChEBI" id="CHEBI:24875"/>
        <note>ligand shared with heterodimeric partner</note>
    </ligand>
</feature>
<feature type="binding site" evidence="1">
    <location>
        <position position="332"/>
    </location>
    <ligand>
        <name>[CaMn4O5] cluster</name>
        <dbReference type="ChEBI" id="CHEBI:189552"/>
    </ligand>
</feature>
<feature type="binding site" evidence="1">
    <location>
        <position position="333"/>
    </location>
    <ligand>
        <name>[CaMn4O5] cluster</name>
        <dbReference type="ChEBI" id="CHEBI:189552"/>
    </ligand>
</feature>
<feature type="binding site" evidence="1">
    <location>
        <position position="342"/>
    </location>
    <ligand>
        <name>[CaMn4O5] cluster</name>
        <dbReference type="ChEBI" id="CHEBI:189552"/>
    </ligand>
</feature>
<feature type="binding site" evidence="1">
    <location>
        <position position="344"/>
    </location>
    <ligand>
        <name>[CaMn4O5] cluster</name>
        <dbReference type="ChEBI" id="CHEBI:189552"/>
    </ligand>
</feature>
<feature type="site" description="Tyrosine radical intermediate" evidence="1">
    <location>
        <position position="161"/>
    </location>
</feature>
<feature type="site" description="Stabilizes free radical intermediate" evidence="1">
    <location>
        <position position="190"/>
    </location>
</feature>
<feature type="site" description="Cleavage; by CTPA" evidence="1">
    <location>
        <begin position="344"/>
        <end position="345"/>
    </location>
</feature>
<feature type="modified residue" description="N-acetylthreonine" evidence="1">
    <location>
        <position position="2"/>
    </location>
</feature>
<feature type="modified residue" description="Phosphothreonine" evidence="1">
    <location>
        <position position="2"/>
    </location>
</feature>
<comment type="function">
    <text evidence="1">Photosystem II (PSII) is a light-driven water:plastoquinone oxidoreductase that uses light energy to abstract electrons from H(2)O, generating O(2) and a proton gradient subsequently used for ATP formation. It consists of a core antenna complex that captures photons, and an electron transfer chain that converts photonic excitation into a charge separation. The D1/D2 (PsbA/PsbD) reaction center heterodimer binds P680, the primary electron donor of PSII as well as several subsequent electron acceptors.</text>
</comment>
<comment type="catalytic activity">
    <reaction evidence="1">
        <text>2 a plastoquinone + 4 hnu + 2 H2O = 2 a plastoquinol + O2</text>
        <dbReference type="Rhea" id="RHEA:36359"/>
        <dbReference type="Rhea" id="RHEA-COMP:9561"/>
        <dbReference type="Rhea" id="RHEA-COMP:9562"/>
        <dbReference type="ChEBI" id="CHEBI:15377"/>
        <dbReference type="ChEBI" id="CHEBI:15379"/>
        <dbReference type="ChEBI" id="CHEBI:17757"/>
        <dbReference type="ChEBI" id="CHEBI:30212"/>
        <dbReference type="ChEBI" id="CHEBI:62192"/>
        <dbReference type="EC" id="1.10.3.9"/>
    </reaction>
</comment>
<comment type="cofactor">
    <text evidence="1">The D1/D2 heterodimer binds P680, chlorophylls that are the primary electron donor of PSII, and subsequent electron acceptors. It shares a non-heme iron and each subunit binds pheophytin, quinone, additional chlorophylls, carotenoids and lipids. D1 provides most of the ligands for the Mn4-Ca-O5 cluster of the oxygen-evolving complex (OEC). There is also a Cl(-1) ion associated with D1 and D2, which is required for oxygen evolution. The PSII complex binds additional chlorophylls, carotenoids and specific lipids.</text>
</comment>
<comment type="subunit">
    <text evidence="1">PSII is composed of 1 copy each of membrane proteins PsbA, PsbB, PsbC, PsbD, PsbE, PsbF, PsbH, PsbI, PsbJ, PsbK, PsbL, PsbM, PsbT, PsbX, PsbY, PsbZ, Psb30/Ycf12, at least 3 peripheral proteins of the oxygen-evolving complex and a large number of cofactors. It forms dimeric complexes.</text>
</comment>
<comment type="subcellular location">
    <subcellularLocation>
        <location evidence="1">Plastid</location>
        <location evidence="1">Chloroplast thylakoid membrane</location>
        <topology evidence="1">Multi-pass membrane protein</topology>
    </subcellularLocation>
</comment>
<comment type="PTM">
    <text evidence="1">Tyr-161 forms a radical intermediate that is referred to as redox-active TyrZ, YZ or Y-Z.</text>
</comment>
<comment type="PTM">
    <text evidence="1">C-terminally processed by CTPA; processing is essential to allow assembly of the oxygen-evolving complex and thus photosynthetic growth.</text>
</comment>
<comment type="miscellaneous">
    <text evidence="1">2 of the reaction center chlorophylls (ChlD1 and ChlD2) are entirely coordinated by water.</text>
</comment>
<comment type="miscellaneous">
    <text evidence="1">Herbicides such as atrazine, BNT, diuron or ioxynil bind in the Q(B) binding site and block subsequent electron transfer.</text>
</comment>
<comment type="similarity">
    <text evidence="1">Belongs to the reaction center PufL/M/PsbA/D family.</text>
</comment>
<organism>
    <name type="scientific">Saccharum hybrid</name>
    <name type="common">Sugarcane</name>
    <dbReference type="NCBI Taxonomy" id="15819"/>
    <lineage>
        <taxon>Eukaryota</taxon>
        <taxon>Viridiplantae</taxon>
        <taxon>Streptophyta</taxon>
        <taxon>Embryophyta</taxon>
        <taxon>Tracheophyta</taxon>
        <taxon>Spermatophyta</taxon>
        <taxon>Magnoliopsida</taxon>
        <taxon>Liliopsida</taxon>
        <taxon>Poales</taxon>
        <taxon>Poaceae</taxon>
        <taxon>PACMAD clade</taxon>
        <taxon>Panicoideae</taxon>
        <taxon>Andropogonodae</taxon>
        <taxon>Andropogoneae</taxon>
        <taxon>Saccharinae</taxon>
        <taxon>Saccharum</taxon>
    </lineage>
</organism>
<protein>
    <recommendedName>
        <fullName evidence="1">Photosystem II protein D1</fullName>
        <shortName evidence="1">PSII D1 protein</shortName>
        <ecNumber evidence="1">1.10.3.9</ecNumber>
    </recommendedName>
    <alternativeName>
        <fullName evidence="1">Photosystem II Q(B) protein</fullName>
    </alternativeName>
</protein>
<evidence type="ECO:0000255" key="1">
    <source>
        <dbReference type="HAMAP-Rule" id="MF_01379"/>
    </source>
</evidence>
<proteinExistence type="inferred from homology"/>
<sequence length="353" mass="38935">MTAILERRESTSLWGRFCNWITSTENRLYIGWFGVLMIPTLLTATSVFIIAFIAAPPVDIDGIREPVSGSLLYGNNIISGAIIPTSAAIGLHFYPIWEAASVDEWLYNGGPYELIVLHFLLGVACYMGREWELSFRLGMRPWIAVAYSAPVAAATAVFLIYPIGQGSFSDGMPLGISGTFNFMIVFQAEHNILMHPFHMLGVAGVFGGSLFSAMHGSLVTSSLIRETTENESANEGYKFGQEEETYNIVAAHGYFGRLIFQYASFNNSRSLHFFLAAWPVVGIWFTALGISTMAFNLNGFNFNQSVVDSQGRVINTWADIINRANLGMEVMHERNAHNFPLDLAALEVPSLNG</sequence>